<proteinExistence type="inferred from homology"/>
<reference key="1">
    <citation type="journal article" date="2001" name="Nature">
        <title>Genome sequence of enterohaemorrhagic Escherichia coli O157:H7.</title>
        <authorList>
            <person name="Perna N.T."/>
            <person name="Plunkett G. III"/>
            <person name="Burland V."/>
            <person name="Mau B."/>
            <person name="Glasner J.D."/>
            <person name="Rose D.J."/>
            <person name="Mayhew G.F."/>
            <person name="Evans P.S."/>
            <person name="Gregor J."/>
            <person name="Kirkpatrick H.A."/>
            <person name="Posfai G."/>
            <person name="Hackett J."/>
            <person name="Klink S."/>
            <person name="Boutin A."/>
            <person name="Shao Y."/>
            <person name="Miller L."/>
            <person name="Grotbeck E.J."/>
            <person name="Davis N.W."/>
            <person name="Lim A."/>
            <person name="Dimalanta E.T."/>
            <person name="Potamousis K."/>
            <person name="Apodaca J."/>
            <person name="Anantharaman T.S."/>
            <person name="Lin J."/>
            <person name="Yen G."/>
            <person name="Schwartz D.C."/>
            <person name="Welch R.A."/>
            <person name="Blattner F.R."/>
        </authorList>
    </citation>
    <scope>NUCLEOTIDE SEQUENCE [LARGE SCALE GENOMIC DNA]</scope>
    <source>
        <strain>O157:H7 / EDL933 / ATCC 700927 / EHEC</strain>
    </source>
</reference>
<reference key="2">
    <citation type="journal article" date="2001" name="DNA Res.">
        <title>Complete genome sequence of enterohemorrhagic Escherichia coli O157:H7 and genomic comparison with a laboratory strain K-12.</title>
        <authorList>
            <person name="Hayashi T."/>
            <person name="Makino K."/>
            <person name="Ohnishi M."/>
            <person name="Kurokawa K."/>
            <person name="Ishii K."/>
            <person name="Yokoyama K."/>
            <person name="Han C.-G."/>
            <person name="Ohtsubo E."/>
            <person name="Nakayama K."/>
            <person name="Murata T."/>
            <person name="Tanaka M."/>
            <person name="Tobe T."/>
            <person name="Iida T."/>
            <person name="Takami H."/>
            <person name="Honda T."/>
            <person name="Sasakawa C."/>
            <person name="Ogasawara N."/>
            <person name="Yasunaga T."/>
            <person name="Kuhara S."/>
            <person name="Shiba T."/>
            <person name="Hattori M."/>
            <person name="Shinagawa H."/>
        </authorList>
    </citation>
    <scope>NUCLEOTIDE SEQUENCE [LARGE SCALE GENOMIC DNA]</scope>
    <source>
        <strain>O157:H7 / Sakai / RIMD 0509952 / EHEC</strain>
    </source>
</reference>
<protein>
    <recommendedName>
        <fullName>DinI-like protein Z3305/ECs2939 in prophage CP-933V</fullName>
    </recommendedName>
</protein>
<dbReference type="EMBL" id="AE005174">
    <property type="protein sequence ID" value="AAG57195.1"/>
    <property type="molecule type" value="Genomic_DNA"/>
</dbReference>
<dbReference type="EMBL" id="BA000007">
    <property type="protein sequence ID" value="BAB36362.1"/>
    <property type="molecule type" value="Genomic_DNA"/>
</dbReference>
<dbReference type="PIR" id="C90996">
    <property type="entry name" value="C90996"/>
</dbReference>
<dbReference type="PIR" id="G85841">
    <property type="entry name" value="G85841"/>
</dbReference>
<dbReference type="RefSeq" id="NP_310966.1">
    <property type="nucleotide sequence ID" value="NC_002695.1"/>
</dbReference>
<dbReference type="RefSeq" id="WP_001261937.1">
    <property type="nucleotide sequence ID" value="NZ_VOAI01000013.1"/>
</dbReference>
<dbReference type="SMR" id="P0DUE4"/>
<dbReference type="KEGG" id="ece:Z3305"/>
<dbReference type="KEGG" id="ecs:ECs_2939"/>
<dbReference type="OMA" id="VEIYIAK"/>
<dbReference type="Proteomes" id="UP000000558">
    <property type="component" value="Chromosome"/>
</dbReference>
<dbReference type="Proteomes" id="UP000002519">
    <property type="component" value="Chromosome"/>
</dbReference>
<dbReference type="GO" id="GO:0006281">
    <property type="term" value="P:DNA repair"/>
    <property type="evidence" value="ECO:0007669"/>
    <property type="project" value="UniProtKB-KW"/>
</dbReference>
<dbReference type="GO" id="GO:0009432">
    <property type="term" value="P:SOS response"/>
    <property type="evidence" value="ECO:0007669"/>
    <property type="project" value="TreeGrafter"/>
</dbReference>
<dbReference type="Gene3D" id="3.30.910.10">
    <property type="entry name" value="DinI-like"/>
    <property type="match status" value="1"/>
</dbReference>
<dbReference type="InterPro" id="IPR036687">
    <property type="entry name" value="DinI-like_sf"/>
</dbReference>
<dbReference type="InterPro" id="IPR010391">
    <property type="entry name" value="DNA_damage-inducible_DinI-like"/>
</dbReference>
<dbReference type="PANTHER" id="PTHR36572:SF2">
    <property type="entry name" value="DNA DAMAGE-INDUCIBLE PROTEIN I"/>
    <property type="match status" value="1"/>
</dbReference>
<dbReference type="PANTHER" id="PTHR36572">
    <property type="entry name" value="DNA DAMAGE-INDUCIBLE PROTEIN I-RELATED"/>
    <property type="match status" value="1"/>
</dbReference>
<dbReference type="Pfam" id="PF06183">
    <property type="entry name" value="DinI"/>
    <property type="match status" value="1"/>
</dbReference>
<dbReference type="SUPFAM" id="SSF54857">
    <property type="entry name" value="DNA damage-inducible protein DinI"/>
    <property type="match status" value="1"/>
</dbReference>
<organism>
    <name type="scientific">Escherichia coli O157:H7</name>
    <dbReference type="NCBI Taxonomy" id="83334"/>
    <lineage>
        <taxon>Bacteria</taxon>
        <taxon>Pseudomonadati</taxon>
        <taxon>Pseudomonadota</taxon>
        <taxon>Gammaproteobacteria</taxon>
        <taxon>Enterobacterales</taxon>
        <taxon>Enterobacteriaceae</taxon>
        <taxon>Escherichia</taxon>
    </lineage>
</organism>
<name>DINI1_ECO57</name>
<accession>P0DUE4</accession>
<accession>Q9EYF1</accession>
<comment type="similarity">
    <text evidence="1">Belongs to the DinI family.</text>
</comment>
<keyword id="KW-0227">DNA damage</keyword>
<keyword id="KW-0234">DNA repair</keyword>
<keyword id="KW-1185">Reference proteome</keyword>
<feature type="chain" id="PRO_0000201646" description="DinI-like protein Z3305/ECs2939 in prophage CP-933V">
    <location>
        <begin position="1"/>
        <end position="82"/>
    </location>
</feature>
<gene>
    <name type="ordered locus">Z3305</name>
    <name type="ordered locus">ECs2939</name>
    <name type="ORF">H0001</name>
</gene>
<evidence type="ECO:0000305" key="1"/>
<sequence length="82" mass="9379">MRVEICIAKEKITKMPNGAVDALKEELTRRISKRYDDVEVIVKATSNDGLSVTRTADKDSAKTFVQETLKDTWESADEWFVR</sequence>